<sequence length="166" mass="18065">MSNAHAQAGLATLDSSMAERLPSVSQTLFSAKAATGITFEDMAKELGRSEVAVAGMFYGQVQASAEDVVKLSQLLQVSQESLAPLMAFPNRGHAGPMPPVEPLIYRLYEVVQNYGYAFKAVMNEKFGDGIMSAIAFNTKVEKEVDEAGNPWVVITLKGKWLPFTRF</sequence>
<gene>
    <name evidence="1" type="primary">CYN1</name>
    <name type="ORF">VDBG_00024</name>
</gene>
<feature type="chain" id="PRO_0000403271" description="Cyanate hydratase">
    <location>
        <begin position="1"/>
        <end position="166"/>
    </location>
</feature>
<feature type="active site" evidence="1">
    <location>
        <position position="106"/>
    </location>
</feature>
<feature type="active site" evidence="1">
    <location>
        <position position="109"/>
    </location>
</feature>
<feature type="active site" evidence="1">
    <location>
        <position position="132"/>
    </location>
</feature>
<comment type="function">
    <text evidence="1">Catalyzes the reaction of cyanate with bicarbonate to produce ammonia and carbon dioxide.</text>
</comment>
<comment type="catalytic activity">
    <reaction evidence="1">
        <text>cyanate + hydrogencarbonate + 3 H(+) = NH4(+) + 2 CO2</text>
        <dbReference type="Rhea" id="RHEA:11120"/>
        <dbReference type="ChEBI" id="CHEBI:15378"/>
        <dbReference type="ChEBI" id="CHEBI:16526"/>
        <dbReference type="ChEBI" id="CHEBI:17544"/>
        <dbReference type="ChEBI" id="CHEBI:28938"/>
        <dbReference type="ChEBI" id="CHEBI:29195"/>
        <dbReference type="EC" id="4.2.1.104"/>
    </reaction>
</comment>
<comment type="similarity">
    <text evidence="1">Belongs to the cyanase family.</text>
</comment>
<name>CYNS_VERA1</name>
<keyword id="KW-0456">Lyase</keyword>
<keyword id="KW-1185">Reference proteome</keyword>
<evidence type="ECO:0000255" key="1">
    <source>
        <dbReference type="HAMAP-Rule" id="MF_03139"/>
    </source>
</evidence>
<dbReference type="EC" id="4.2.1.104" evidence="1"/>
<dbReference type="EMBL" id="DS985214">
    <property type="protein sequence ID" value="EEY13917.1"/>
    <property type="molecule type" value="Genomic_DNA"/>
</dbReference>
<dbReference type="RefSeq" id="XP_003008343.1">
    <property type="nucleotide sequence ID" value="XM_003008297.1"/>
</dbReference>
<dbReference type="SMR" id="C9S8A7"/>
<dbReference type="STRING" id="526221.C9S8A7"/>
<dbReference type="GeneID" id="9528435"/>
<dbReference type="KEGG" id="val:VDBG_00024"/>
<dbReference type="eggNOG" id="ENOG502S3I5">
    <property type="taxonomic scope" value="Eukaryota"/>
</dbReference>
<dbReference type="HOGENOM" id="CLU_103452_0_0_1"/>
<dbReference type="OMA" id="YELVMIN"/>
<dbReference type="OrthoDB" id="10019422at2759"/>
<dbReference type="Proteomes" id="UP000008698">
    <property type="component" value="Unassembled WGS sequence"/>
</dbReference>
<dbReference type="GO" id="GO:0008824">
    <property type="term" value="F:cyanate hydratase activity"/>
    <property type="evidence" value="ECO:0007669"/>
    <property type="project" value="UniProtKB-UniRule"/>
</dbReference>
<dbReference type="GO" id="GO:0003677">
    <property type="term" value="F:DNA binding"/>
    <property type="evidence" value="ECO:0007669"/>
    <property type="project" value="InterPro"/>
</dbReference>
<dbReference type="GO" id="GO:0009439">
    <property type="term" value="P:cyanate metabolic process"/>
    <property type="evidence" value="ECO:0007669"/>
    <property type="project" value="UniProtKB-UniRule"/>
</dbReference>
<dbReference type="CDD" id="cd00559">
    <property type="entry name" value="Cyanase_C"/>
    <property type="match status" value="1"/>
</dbReference>
<dbReference type="Gene3D" id="3.30.1160.10">
    <property type="entry name" value="Cyanate lyase, C-terminal domain"/>
    <property type="match status" value="1"/>
</dbReference>
<dbReference type="Gene3D" id="1.10.260.40">
    <property type="entry name" value="lambda repressor-like DNA-binding domains"/>
    <property type="match status" value="1"/>
</dbReference>
<dbReference type="HAMAP" id="MF_00535">
    <property type="entry name" value="Cyanate_hydrat"/>
    <property type="match status" value="1"/>
</dbReference>
<dbReference type="InterPro" id="IPR001387">
    <property type="entry name" value="Cro/C1-type_HTH"/>
</dbReference>
<dbReference type="InterPro" id="IPR008076">
    <property type="entry name" value="Cyanase"/>
</dbReference>
<dbReference type="InterPro" id="IPR003712">
    <property type="entry name" value="Cyanate_lyase_C"/>
</dbReference>
<dbReference type="InterPro" id="IPR036581">
    <property type="entry name" value="Cyanate_lyase_C_sf"/>
</dbReference>
<dbReference type="InterPro" id="IPR010982">
    <property type="entry name" value="Lambda_DNA-bd_dom_sf"/>
</dbReference>
<dbReference type="NCBIfam" id="TIGR00673">
    <property type="entry name" value="cynS"/>
    <property type="match status" value="1"/>
</dbReference>
<dbReference type="PANTHER" id="PTHR34186">
    <property type="entry name" value="CYANATE HYDRATASE"/>
    <property type="match status" value="1"/>
</dbReference>
<dbReference type="PANTHER" id="PTHR34186:SF2">
    <property type="entry name" value="CYANATE HYDRATASE"/>
    <property type="match status" value="1"/>
</dbReference>
<dbReference type="Pfam" id="PF02560">
    <property type="entry name" value="Cyanate_lyase"/>
    <property type="match status" value="1"/>
</dbReference>
<dbReference type="PIRSF" id="PIRSF001263">
    <property type="entry name" value="Cyanate_hydratas"/>
    <property type="match status" value="1"/>
</dbReference>
<dbReference type="PRINTS" id="PR01693">
    <property type="entry name" value="CYANASE"/>
</dbReference>
<dbReference type="SMART" id="SM01116">
    <property type="entry name" value="Cyanate_lyase"/>
    <property type="match status" value="1"/>
</dbReference>
<dbReference type="SUPFAM" id="SSF55234">
    <property type="entry name" value="Cyanase C-terminal domain"/>
    <property type="match status" value="1"/>
</dbReference>
<dbReference type="SUPFAM" id="SSF47413">
    <property type="entry name" value="lambda repressor-like DNA-binding domains"/>
    <property type="match status" value="1"/>
</dbReference>
<organism>
    <name type="scientific">Verticillium alfalfae (strain VaMs.102 / ATCC MYA-4576 / FGSC 10136)</name>
    <name type="common">Verticillium wilt of alfalfa</name>
    <name type="synonym">Verticillium albo-atrum</name>
    <dbReference type="NCBI Taxonomy" id="526221"/>
    <lineage>
        <taxon>Eukaryota</taxon>
        <taxon>Fungi</taxon>
        <taxon>Dikarya</taxon>
        <taxon>Ascomycota</taxon>
        <taxon>Pezizomycotina</taxon>
        <taxon>Sordariomycetes</taxon>
        <taxon>Hypocreomycetidae</taxon>
        <taxon>Glomerellales</taxon>
        <taxon>Plectosphaerellaceae</taxon>
        <taxon>Verticillium</taxon>
    </lineage>
</organism>
<proteinExistence type="inferred from homology"/>
<reference key="1">
    <citation type="journal article" date="2011" name="PLoS Pathog.">
        <title>Comparative genomics yields insights into niche adaptation of plant vascular wilt pathogens.</title>
        <authorList>
            <person name="Klosterman S.J."/>
            <person name="Subbarao K.V."/>
            <person name="Kang S."/>
            <person name="Veronese P."/>
            <person name="Gold S.E."/>
            <person name="Thomma B.P.H.J."/>
            <person name="Chen Z."/>
            <person name="Henrissat B."/>
            <person name="Lee Y.-H."/>
            <person name="Park J."/>
            <person name="Garcia-Pedrajas M.D."/>
            <person name="Barbara D.J."/>
            <person name="Anchieta A."/>
            <person name="de Jonge R."/>
            <person name="Santhanam P."/>
            <person name="Maruthachalam K."/>
            <person name="Atallah Z."/>
            <person name="Amyotte S.G."/>
            <person name="Paz Z."/>
            <person name="Inderbitzin P."/>
            <person name="Hayes R.J."/>
            <person name="Heiman D.I."/>
            <person name="Young S."/>
            <person name="Zeng Q."/>
            <person name="Engels R."/>
            <person name="Galagan J."/>
            <person name="Cuomo C.A."/>
            <person name="Dobinson K.F."/>
            <person name="Ma L.-J."/>
        </authorList>
    </citation>
    <scope>NUCLEOTIDE SEQUENCE [LARGE SCALE GENOMIC DNA]</scope>
    <source>
        <strain>VaMs.102 / ATCC MYA-4576 / FGSC 10136</strain>
    </source>
</reference>
<protein>
    <recommendedName>
        <fullName evidence="1">Cyanate hydratase</fullName>
        <shortName evidence="1">Cyanase</shortName>
        <ecNumber evidence="1">4.2.1.104</ecNumber>
    </recommendedName>
    <alternativeName>
        <fullName evidence="1">Cyanate hydrolase</fullName>
    </alternativeName>
    <alternativeName>
        <fullName evidence="1">Cyanate lyase</fullName>
    </alternativeName>
</protein>
<accession>C9S8A7</accession>